<proteinExistence type="inferred from homology"/>
<gene>
    <name type="primary">ND3</name>
</gene>
<geneLocation type="mitochondrion"/>
<keyword id="KW-0249">Electron transport</keyword>
<keyword id="KW-0472">Membrane</keyword>
<keyword id="KW-0496">Mitochondrion</keyword>
<keyword id="KW-0520">NAD</keyword>
<keyword id="KW-0679">Respiratory chain</keyword>
<keyword id="KW-1278">Translocase</keyword>
<keyword id="KW-0812">Transmembrane</keyword>
<keyword id="KW-1133">Transmembrane helix</keyword>
<keyword id="KW-0813">Transport</keyword>
<keyword id="KW-0830">Ubiquinone</keyword>
<sequence>MIFYLHITIFLVVCLLMMLFFSLGFQGKKAKEKNSPFECGFDPFSLSRVPFSLKFFFVGIVFLIFDVEIVVILPFPLVMMTKNLMFVFSFTFINFLIVLGLLYEFKYSMLDRLK</sequence>
<evidence type="ECO:0000250" key="1"/>
<evidence type="ECO:0000255" key="2"/>
<evidence type="ECO:0000305" key="3"/>
<feature type="chain" id="PRO_0000117824" description="NADH-ubiquinone oxidoreductase chain 3">
    <location>
        <begin position="1"/>
        <end position="114"/>
    </location>
</feature>
<feature type="transmembrane region" description="Helical" evidence="2">
    <location>
        <begin position="1"/>
        <end position="21"/>
    </location>
</feature>
<feature type="transmembrane region" description="Helical" evidence="2">
    <location>
        <begin position="55"/>
        <end position="75"/>
    </location>
</feature>
<feature type="transmembrane region" description="Helical" evidence="2">
    <location>
        <begin position="85"/>
        <end position="105"/>
    </location>
</feature>
<dbReference type="EC" id="7.1.1.2"/>
<dbReference type="EMBL" id="AF081829">
    <property type="protein sequence ID" value="AAD05523.1"/>
    <property type="molecule type" value="Genomic_DNA"/>
</dbReference>
<dbReference type="PIR" id="T11159">
    <property type="entry name" value="T11159"/>
</dbReference>
<dbReference type="RefSeq" id="NP_008516.1">
    <property type="nucleotide sequence ID" value="NC_002074.1"/>
</dbReference>
<dbReference type="SMR" id="O99823"/>
<dbReference type="GeneID" id="808369"/>
<dbReference type="KEGG" id="rsan:808369"/>
<dbReference type="CTD" id="4537"/>
<dbReference type="OrthoDB" id="154075at2759"/>
<dbReference type="GO" id="GO:0031966">
    <property type="term" value="C:mitochondrial membrane"/>
    <property type="evidence" value="ECO:0007669"/>
    <property type="project" value="UniProtKB-SubCell"/>
</dbReference>
<dbReference type="GO" id="GO:0030964">
    <property type="term" value="C:NADH dehydrogenase complex"/>
    <property type="evidence" value="ECO:0007669"/>
    <property type="project" value="TreeGrafter"/>
</dbReference>
<dbReference type="GO" id="GO:0008137">
    <property type="term" value="F:NADH dehydrogenase (ubiquinone) activity"/>
    <property type="evidence" value="ECO:0007669"/>
    <property type="project" value="UniProtKB-EC"/>
</dbReference>
<dbReference type="Gene3D" id="1.20.58.1610">
    <property type="entry name" value="NADH:ubiquinone/plastoquinone oxidoreductase, chain 3"/>
    <property type="match status" value="1"/>
</dbReference>
<dbReference type="InterPro" id="IPR000440">
    <property type="entry name" value="NADH_UbQ/plastoQ_OxRdtase_su3"/>
</dbReference>
<dbReference type="InterPro" id="IPR038430">
    <property type="entry name" value="NDAH_ubi_oxred_su3_sf"/>
</dbReference>
<dbReference type="PANTHER" id="PTHR11058">
    <property type="entry name" value="NADH-UBIQUINONE OXIDOREDUCTASE CHAIN 3"/>
    <property type="match status" value="1"/>
</dbReference>
<dbReference type="PANTHER" id="PTHR11058:SF9">
    <property type="entry name" value="NADH-UBIQUINONE OXIDOREDUCTASE CHAIN 3"/>
    <property type="match status" value="1"/>
</dbReference>
<dbReference type="Pfam" id="PF00507">
    <property type="entry name" value="Oxidored_q4"/>
    <property type="match status" value="1"/>
</dbReference>
<reference key="1">
    <citation type="journal article" date="1998" name="Mol. Biol. Evol.">
        <title>Mitochondrial gene order is not conserved in arthropods: prostriate and metastriate tick mitochondrial genomes.</title>
        <authorList>
            <person name="Black W.C. IV"/>
            <person name="Roehrdanz R.L."/>
        </authorList>
    </citation>
    <scope>NUCLEOTIDE SEQUENCE [GENOMIC DNA]</scope>
</reference>
<accession>O99823</accession>
<organism>
    <name type="scientific">Rhipicephalus sanguineus</name>
    <name type="common">Brown dog tick</name>
    <name type="synonym">Ixodes sanguineus</name>
    <dbReference type="NCBI Taxonomy" id="34632"/>
    <lineage>
        <taxon>Eukaryota</taxon>
        <taxon>Metazoa</taxon>
        <taxon>Ecdysozoa</taxon>
        <taxon>Arthropoda</taxon>
        <taxon>Chelicerata</taxon>
        <taxon>Arachnida</taxon>
        <taxon>Acari</taxon>
        <taxon>Parasitiformes</taxon>
        <taxon>Ixodida</taxon>
        <taxon>Ixodoidea</taxon>
        <taxon>Ixodidae</taxon>
        <taxon>Rhipicephalinae</taxon>
        <taxon>Rhipicephalus</taxon>
        <taxon>Rhipicephalus</taxon>
    </lineage>
</organism>
<comment type="function">
    <text evidence="1">Core subunit of the mitochondrial membrane respiratory chain NADH dehydrogenase (Complex I) that is believed to belong to the minimal assembly required for catalysis. Complex I functions in the transfer of electrons from NADH to the respiratory chain. The immediate electron acceptor for the enzyme is believed to be ubiquinone (By similarity).</text>
</comment>
<comment type="catalytic activity">
    <reaction>
        <text>a ubiquinone + NADH + 5 H(+)(in) = a ubiquinol + NAD(+) + 4 H(+)(out)</text>
        <dbReference type="Rhea" id="RHEA:29091"/>
        <dbReference type="Rhea" id="RHEA-COMP:9565"/>
        <dbReference type="Rhea" id="RHEA-COMP:9566"/>
        <dbReference type="ChEBI" id="CHEBI:15378"/>
        <dbReference type="ChEBI" id="CHEBI:16389"/>
        <dbReference type="ChEBI" id="CHEBI:17976"/>
        <dbReference type="ChEBI" id="CHEBI:57540"/>
        <dbReference type="ChEBI" id="CHEBI:57945"/>
        <dbReference type="EC" id="7.1.1.2"/>
    </reaction>
</comment>
<comment type="subcellular location">
    <subcellularLocation>
        <location evidence="1">Mitochondrion membrane</location>
        <topology evidence="1">Multi-pass membrane protein</topology>
    </subcellularLocation>
</comment>
<comment type="similarity">
    <text evidence="3">Belongs to the complex I subunit 3 family.</text>
</comment>
<protein>
    <recommendedName>
        <fullName>NADH-ubiquinone oxidoreductase chain 3</fullName>
        <ecNumber>7.1.1.2</ecNumber>
    </recommendedName>
    <alternativeName>
        <fullName>NADH dehydrogenase subunit 3</fullName>
    </alternativeName>
</protein>
<name>NU3M_RHISA</name>